<organism>
    <name type="scientific">Burkholderia lata (strain ATCC 17760 / DSM 23089 / LMG 22485 / NCIMB 9086 / R18194 / 383)</name>
    <dbReference type="NCBI Taxonomy" id="482957"/>
    <lineage>
        <taxon>Bacteria</taxon>
        <taxon>Pseudomonadati</taxon>
        <taxon>Pseudomonadota</taxon>
        <taxon>Betaproteobacteria</taxon>
        <taxon>Burkholderiales</taxon>
        <taxon>Burkholderiaceae</taxon>
        <taxon>Burkholderia</taxon>
        <taxon>Burkholderia cepacia complex</taxon>
    </lineage>
</organism>
<accession>Q39BZ1</accession>
<reference key="1">
    <citation type="submission" date="2005-10" db="EMBL/GenBank/DDBJ databases">
        <title>Complete sequence of chromosome 1 of Burkholderia sp. 383.</title>
        <authorList>
            <consortium name="US DOE Joint Genome Institute"/>
            <person name="Copeland A."/>
            <person name="Lucas S."/>
            <person name="Lapidus A."/>
            <person name="Barry K."/>
            <person name="Detter J.C."/>
            <person name="Glavina T."/>
            <person name="Hammon N."/>
            <person name="Israni S."/>
            <person name="Pitluck S."/>
            <person name="Chain P."/>
            <person name="Malfatti S."/>
            <person name="Shin M."/>
            <person name="Vergez L."/>
            <person name="Schmutz J."/>
            <person name="Larimer F."/>
            <person name="Land M."/>
            <person name="Kyrpides N."/>
            <person name="Lykidis A."/>
            <person name="Richardson P."/>
        </authorList>
    </citation>
    <scope>NUCLEOTIDE SEQUENCE [LARGE SCALE GENOMIC DNA]</scope>
    <source>
        <strain>ATCC 17760 / DSM 23089 / LMG 22485 / NCIMB 9086 / R18194 / 383</strain>
    </source>
</reference>
<protein>
    <recommendedName>
        <fullName evidence="1">S-adenosylmethionine synthase</fullName>
        <shortName evidence="1">AdoMet synthase</shortName>
        <ecNumber evidence="1">2.5.1.6</ecNumber>
    </recommendedName>
    <alternativeName>
        <fullName evidence="1">MAT</fullName>
    </alternativeName>
    <alternativeName>
        <fullName evidence="1">Methionine adenosyltransferase</fullName>
    </alternativeName>
</protein>
<feature type="chain" id="PRO_0000240984" description="S-adenosylmethionine synthase">
    <location>
        <begin position="1"/>
        <end position="395"/>
    </location>
</feature>
<feature type="region of interest" description="Flexible loop" evidence="1">
    <location>
        <begin position="100"/>
        <end position="110"/>
    </location>
</feature>
<feature type="binding site" description="in other chain" evidence="1">
    <location>
        <position position="16"/>
    </location>
    <ligand>
        <name>ATP</name>
        <dbReference type="ChEBI" id="CHEBI:30616"/>
        <note>ligand shared between two neighboring subunits</note>
    </ligand>
</feature>
<feature type="binding site" evidence="1">
    <location>
        <position position="18"/>
    </location>
    <ligand>
        <name>Mg(2+)</name>
        <dbReference type="ChEBI" id="CHEBI:18420"/>
    </ligand>
</feature>
<feature type="binding site" evidence="1">
    <location>
        <position position="44"/>
    </location>
    <ligand>
        <name>K(+)</name>
        <dbReference type="ChEBI" id="CHEBI:29103"/>
    </ligand>
</feature>
<feature type="binding site" description="in other chain" evidence="1">
    <location>
        <position position="57"/>
    </location>
    <ligand>
        <name>L-methionine</name>
        <dbReference type="ChEBI" id="CHEBI:57844"/>
        <note>ligand shared between two neighboring subunits</note>
    </ligand>
</feature>
<feature type="binding site" description="in other chain" evidence="1">
    <location>
        <position position="100"/>
    </location>
    <ligand>
        <name>L-methionine</name>
        <dbReference type="ChEBI" id="CHEBI:57844"/>
        <note>ligand shared between two neighboring subunits</note>
    </ligand>
</feature>
<feature type="binding site" description="in other chain" evidence="1">
    <location>
        <begin position="167"/>
        <end position="169"/>
    </location>
    <ligand>
        <name>ATP</name>
        <dbReference type="ChEBI" id="CHEBI:30616"/>
        <note>ligand shared between two neighboring subunits</note>
    </ligand>
</feature>
<feature type="binding site" description="in other chain" evidence="1">
    <location>
        <begin position="233"/>
        <end position="234"/>
    </location>
    <ligand>
        <name>ATP</name>
        <dbReference type="ChEBI" id="CHEBI:30616"/>
        <note>ligand shared between two neighboring subunits</note>
    </ligand>
</feature>
<feature type="binding site" evidence="1">
    <location>
        <position position="242"/>
    </location>
    <ligand>
        <name>ATP</name>
        <dbReference type="ChEBI" id="CHEBI:30616"/>
        <note>ligand shared between two neighboring subunits</note>
    </ligand>
</feature>
<feature type="binding site" evidence="1">
    <location>
        <position position="242"/>
    </location>
    <ligand>
        <name>L-methionine</name>
        <dbReference type="ChEBI" id="CHEBI:57844"/>
        <note>ligand shared between two neighboring subunits</note>
    </ligand>
</feature>
<feature type="binding site" description="in other chain" evidence="1">
    <location>
        <begin position="248"/>
        <end position="249"/>
    </location>
    <ligand>
        <name>ATP</name>
        <dbReference type="ChEBI" id="CHEBI:30616"/>
        <note>ligand shared between two neighboring subunits</note>
    </ligand>
</feature>
<feature type="binding site" evidence="1">
    <location>
        <position position="265"/>
    </location>
    <ligand>
        <name>ATP</name>
        <dbReference type="ChEBI" id="CHEBI:30616"/>
        <note>ligand shared between two neighboring subunits</note>
    </ligand>
</feature>
<feature type="binding site" evidence="1">
    <location>
        <position position="269"/>
    </location>
    <ligand>
        <name>ATP</name>
        <dbReference type="ChEBI" id="CHEBI:30616"/>
        <note>ligand shared between two neighboring subunits</note>
    </ligand>
</feature>
<feature type="binding site" description="in other chain" evidence="1">
    <location>
        <position position="273"/>
    </location>
    <ligand>
        <name>L-methionine</name>
        <dbReference type="ChEBI" id="CHEBI:57844"/>
        <note>ligand shared between two neighboring subunits</note>
    </ligand>
</feature>
<keyword id="KW-0067">ATP-binding</keyword>
<keyword id="KW-0963">Cytoplasm</keyword>
<keyword id="KW-0460">Magnesium</keyword>
<keyword id="KW-0479">Metal-binding</keyword>
<keyword id="KW-0547">Nucleotide-binding</keyword>
<keyword id="KW-0554">One-carbon metabolism</keyword>
<keyword id="KW-0630">Potassium</keyword>
<keyword id="KW-0808">Transferase</keyword>
<dbReference type="EC" id="2.5.1.6" evidence="1"/>
<dbReference type="EMBL" id="CP000151">
    <property type="protein sequence ID" value="ABB10025.1"/>
    <property type="molecule type" value="Genomic_DNA"/>
</dbReference>
<dbReference type="RefSeq" id="WP_011353531.1">
    <property type="nucleotide sequence ID" value="NZ_WNDV01000015.1"/>
</dbReference>
<dbReference type="SMR" id="Q39BZ1"/>
<dbReference type="GeneID" id="56663111"/>
<dbReference type="KEGG" id="bur:Bcep18194_A6431"/>
<dbReference type="HOGENOM" id="CLU_041802_1_1_4"/>
<dbReference type="UniPathway" id="UPA00315">
    <property type="reaction ID" value="UER00080"/>
</dbReference>
<dbReference type="Proteomes" id="UP000002705">
    <property type="component" value="Chromosome 1"/>
</dbReference>
<dbReference type="GO" id="GO:0005737">
    <property type="term" value="C:cytoplasm"/>
    <property type="evidence" value="ECO:0007669"/>
    <property type="project" value="UniProtKB-SubCell"/>
</dbReference>
<dbReference type="GO" id="GO:0005524">
    <property type="term" value="F:ATP binding"/>
    <property type="evidence" value="ECO:0007669"/>
    <property type="project" value="UniProtKB-UniRule"/>
</dbReference>
<dbReference type="GO" id="GO:0000287">
    <property type="term" value="F:magnesium ion binding"/>
    <property type="evidence" value="ECO:0007669"/>
    <property type="project" value="UniProtKB-UniRule"/>
</dbReference>
<dbReference type="GO" id="GO:0004478">
    <property type="term" value="F:methionine adenosyltransferase activity"/>
    <property type="evidence" value="ECO:0007669"/>
    <property type="project" value="UniProtKB-UniRule"/>
</dbReference>
<dbReference type="GO" id="GO:0006730">
    <property type="term" value="P:one-carbon metabolic process"/>
    <property type="evidence" value="ECO:0007669"/>
    <property type="project" value="UniProtKB-KW"/>
</dbReference>
<dbReference type="GO" id="GO:0006556">
    <property type="term" value="P:S-adenosylmethionine biosynthetic process"/>
    <property type="evidence" value="ECO:0007669"/>
    <property type="project" value="UniProtKB-UniRule"/>
</dbReference>
<dbReference type="CDD" id="cd18079">
    <property type="entry name" value="S-AdoMet_synt"/>
    <property type="match status" value="1"/>
</dbReference>
<dbReference type="FunFam" id="3.30.300.10:FF:000003">
    <property type="entry name" value="S-adenosylmethionine synthase"/>
    <property type="match status" value="1"/>
</dbReference>
<dbReference type="FunFam" id="3.30.300.10:FF:000004">
    <property type="entry name" value="S-adenosylmethionine synthase"/>
    <property type="match status" value="1"/>
</dbReference>
<dbReference type="Gene3D" id="3.30.300.10">
    <property type="match status" value="3"/>
</dbReference>
<dbReference type="HAMAP" id="MF_00086">
    <property type="entry name" value="S_AdoMet_synth1"/>
    <property type="match status" value="1"/>
</dbReference>
<dbReference type="InterPro" id="IPR022631">
    <property type="entry name" value="ADOMET_SYNTHASE_CS"/>
</dbReference>
<dbReference type="InterPro" id="IPR022630">
    <property type="entry name" value="S-AdoMet_synt_C"/>
</dbReference>
<dbReference type="InterPro" id="IPR022629">
    <property type="entry name" value="S-AdoMet_synt_central"/>
</dbReference>
<dbReference type="InterPro" id="IPR022628">
    <property type="entry name" value="S-AdoMet_synt_N"/>
</dbReference>
<dbReference type="InterPro" id="IPR002133">
    <property type="entry name" value="S-AdoMet_synthetase"/>
</dbReference>
<dbReference type="InterPro" id="IPR022636">
    <property type="entry name" value="S-AdoMet_synthetase_sfam"/>
</dbReference>
<dbReference type="NCBIfam" id="TIGR01034">
    <property type="entry name" value="metK"/>
    <property type="match status" value="1"/>
</dbReference>
<dbReference type="PANTHER" id="PTHR11964">
    <property type="entry name" value="S-ADENOSYLMETHIONINE SYNTHETASE"/>
    <property type="match status" value="1"/>
</dbReference>
<dbReference type="Pfam" id="PF02773">
    <property type="entry name" value="S-AdoMet_synt_C"/>
    <property type="match status" value="1"/>
</dbReference>
<dbReference type="Pfam" id="PF02772">
    <property type="entry name" value="S-AdoMet_synt_M"/>
    <property type="match status" value="1"/>
</dbReference>
<dbReference type="Pfam" id="PF00438">
    <property type="entry name" value="S-AdoMet_synt_N"/>
    <property type="match status" value="1"/>
</dbReference>
<dbReference type="PIRSF" id="PIRSF000497">
    <property type="entry name" value="MAT"/>
    <property type="match status" value="1"/>
</dbReference>
<dbReference type="SUPFAM" id="SSF55973">
    <property type="entry name" value="S-adenosylmethionine synthetase"/>
    <property type="match status" value="3"/>
</dbReference>
<dbReference type="PROSITE" id="PS00376">
    <property type="entry name" value="ADOMET_SYNTHASE_1"/>
    <property type="match status" value="1"/>
</dbReference>
<dbReference type="PROSITE" id="PS00377">
    <property type="entry name" value="ADOMET_SYNTHASE_2"/>
    <property type="match status" value="1"/>
</dbReference>
<comment type="function">
    <text evidence="1">Catalyzes the formation of S-adenosylmethionine (AdoMet) from methionine and ATP. The overall synthetic reaction is composed of two sequential steps, AdoMet formation and the subsequent tripolyphosphate hydrolysis which occurs prior to release of AdoMet from the enzyme.</text>
</comment>
<comment type="catalytic activity">
    <reaction evidence="1">
        <text>L-methionine + ATP + H2O = S-adenosyl-L-methionine + phosphate + diphosphate</text>
        <dbReference type="Rhea" id="RHEA:21080"/>
        <dbReference type="ChEBI" id="CHEBI:15377"/>
        <dbReference type="ChEBI" id="CHEBI:30616"/>
        <dbReference type="ChEBI" id="CHEBI:33019"/>
        <dbReference type="ChEBI" id="CHEBI:43474"/>
        <dbReference type="ChEBI" id="CHEBI:57844"/>
        <dbReference type="ChEBI" id="CHEBI:59789"/>
        <dbReference type="EC" id="2.5.1.6"/>
    </reaction>
</comment>
<comment type="cofactor">
    <cofactor evidence="1">
        <name>Mg(2+)</name>
        <dbReference type="ChEBI" id="CHEBI:18420"/>
    </cofactor>
    <text evidence="1">Binds 2 divalent ions per subunit.</text>
</comment>
<comment type="cofactor">
    <cofactor evidence="1">
        <name>K(+)</name>
        <dbReference type="ChEBI" id="CHEBI:29103"/>
    </cofactor>
    <text evidence="1">Binds 1 potassium ion per subunit.</text>
</comment>
<comment type="pathway">
    <text evidence="1">Amino-acid biosynthesis; S-adenosyl-L-methionine biosynthesis; S-adenosyl-L-methionine from L-methionine: step 1/1.</text>
</comment>
<comment type="subunit">
    <text evidence="1">Homotetramer; dimer of dimers.</text>
</comment>
<comment type="subcellular location">
    <subcellularLocation>
        <location evidence="1">Cytoplasm</location>
    </subcellularLocation>
</comment>
<comment type="similarity">
    <text evidence="1">Belongs to the AdoMet synthase family.</text>
</comment>
<gene>
    <name evidence="1" type="primary">metK</name>
    <name type="ordered locus">Bcep18194_A6431</name>
</gene>
<evidence type="ECO:0000255" key="1">
    <source>
        <dbReference type="HAMAP-Rule" id="MF_00086"/>
    </source>
</evidence>
<sequence length="395" mass="42716">MANDYLFTSESVSEGHPDKVADQISDAILDAILEQDKYSRVAAETLCNTGLVVLAGEITTTANIDYIQIARDTIKRIGYDNTDYGIDYKGCAVLVAYDKQSPDIAQGVDRAHDDNLDQGAGDQGLMFGYACDETPELMPLPIYLSHRLVERQASLRRDGRLQWLRPDAKSQVTVRYVDGKPHSIDTVVLSTQHAPDIELPALREAVIEEIIKPTLPADLIKGDIKFLVNPTGRFVIGGPQGDCGLTGRKIIVDTYGGAAPHGGGAFSGKDPSKVDRSAAYAGRYVAKNIVAAGLASRALIQVSYAIGVAEPTSVMVNTFGTGRVSDAVITKLVREHFDLRPKGIIKMLDLLRPIYEKTAAYGHFGREEPEFSWEATDKALALAEAAGVEPTARVA</sequence>
<proteinExistence type="inferred from homology"/>
<name>METK_BURL3</name>